<evidence type="ECO:0000255" key="1">
    <source>
        <dbReference type="HAMAP-Rule" id="MF_01198"/>
    </source>
</evidence>
<reference key="1">
    <citation type="journal article" date="2006" name="Mol. Microbiol.">
        <title>Role of pathogenicity island-associated integrases in the genome plasticity of uropathogenic Escherichia coli strain 536.</title>
        <authorList>
            <person name="Hochhut B."/>
            <person name="Wilde C."/>
            <person name="Balling G."/>
            <person name="Middendorf B."/>
            <person name="Dobrindt U."/>
            <person name="Brzuszkiewicz E."/>
            <person name="Gottschalk G."/>
            <person name="Carniel E."/>
            <person name="Hacker J."/>
        </authorList>
    </citation>
    <scope>NUCLEOTIDE SEQUENCE [LARGE SCALE GENOMIC DNA]</scope>
    <source>
        <strain>536 / UPEC</strain>
    </source>
</reference>
<comment type="function">
    <text evidence="1">Inhibits RpoS proteolysis by regulating RssB activity, thereby increasing the stability of the sigma stress factor RpoS especially during phosphate starvation, but also in stationary phase and during nitrogen starvation. Its effect on RpoS stability is due to its interaction with RssB, which probably blocks the interaction of RssB with RpoS, and the consequent delivery of the RssB-RpoS complex to the ClpXP protein degradation pathway.</text>
</comment>
<comment type="subunit">
    <text evidence="1">Interacts with RssB.</text>
</comment>
<comment type="subcellular location">
    <subcellularLocation>
        <location evidence="1">Cytoplasm</location>
    </subcellularLocation>
</comment>
<comment type="similarity">
    <text evidence="1">Belongs to the IraP family.</text>
</comment>
<dbReference type="EMBL" id="CP000247">
    <property type="protein sequence ID" value="ABG68472.1"/>
    <property type="molecule type" value="Genomic_DNA"/>
</dbReference>
<dbReference type="RefSeq" id="WP_000792973.1">
    <property type="nucleotide sequence ID" value="NC_008253.1"/>
</dbReference>
<dbReference type="SMR" id="Q0TKQ9"/>
<dbReference type="KEGG" id="ecp:ECP_0441"/>
<dbReference type="HOGENOM" id="CLU_169517_0_0_6"/>
<dbReference type="Proteomes" id="UP000009182">
    <property type="component" value="Chromosome"/>
</dbReference>
<dbReference type="GO" id="GO:0005737">
    <property type="term" value="C:cytoplasm"/>
    <property type="evidence" value="ECO:0007669"/>
    <property type="project" value="UniProtKB-SubCell"/>
</dbReference>
<dbReference type="GO" id="GO:0009267">
    <property type="term" value="P:cellular response to starvation"/>
    <property type="evidence" value="ECO:0007669"/>
    <property type="project" value="UniProtKB-UniRule"/>
</dbReference>
<dbReference type="HAMAP" id="MF_01198">
    <property type="entry name" value="Anti_adapt_IraP"/>
    <property type="match status" value="1"/>
</dbReference>
<dbReference type="InterPro" id="IPR019732">
    <property type="entry name" value="SigmaS_Anti-adapt_IraP"/>
</dbReference>
<dbReference type="NCBIfam" id="NF007598">
    <property type="entry name" value="PRK10244.1"/>
    <property type="match status" value="1"/>
</dbReference>
<dbReference type="Pfam" id="PF10796">
    <property type="entry name" value="Anti-adapt_IraP"/>
    <property type="match status" value="1"/>
</dbReference>
<sequence>MKNLIAELLFKLAQKEEESKELCAQVEALEIIVTAMLRNMAQNDQQRLIDQVEGALYEVKPDASIPDDDTELLRDYVKKLLRHPRQ</sequence>
<name>IRAP_ECOL5</name>
<organism>
    <name type="scientific">Escherichia coli O6:K15:H31 (strain 536 / UPEC)</name>
    <dbReference type="NCBI Taxonomy" id="362663"/>
    <lineage>
        <taxon>Bacteria</taxon>
        <taxon>Pseudomonadati</taxon>
        <taxon>Pseudomonadota</taxon>
        <taxon>Gammaproteobacteria</taxon>
        <taxon>Enterobacterales</taxon>
        <taxon>Enterobacteriaceae</taxon>
        <taxon>Escherichia</taxon>
    </lineage>
</organism>
<feature type="chain" id="PRO_0000337855" description="Anti-adapter protein IraP">
    <location>
        <begin position="1"/>
        <end position="86"/>
    </location>
</feature>
<feature type="coiled-coil region" evidence="1">
    <location>
        <begin position="1"/>
        <end position="36"/>
    </location>
</feature>
<keyword id="KW-0175">Coiled coil</keyword>
<keyword id="KW-0963">Cytoplasm</keyword>
<keyword id="KW-0346">Stress response</keyword>
<proteinExistence type="inferred from homology"/>
<gene>
    <name evidence="1" type="primary">iraP</name>
    <name type="ordered locus">ECP_0441</name>
</gene>
<protein>
    <recommendedName>
        <fullName evidence="1">Anti-adapter protein IraP</fullName>
    </recommendedName>
</protein>
<accession>Q0TKQ9</accession>